<proteinExistence type="inferred from homology"/>
<feature type="initiator methionine" description="Removed" evidence="1">
    <location>
        <position position="1"/>
    </location>
</feature>
<feature type="chain" id="PRO_0000294187" description="Histone H2B.6">
    <location>
        <begin position="2"/>
        <end position="153"/>
    </location>
</feature>
<feature type="region of interest" description="Disordered" evidence="2">
    <location>
        <begin position="1"/>
        <end position="60"/>
    </location>
</feature>
<feature type="compositionally biased region" description="Basic and acidic residues" evidence="2">
    <location>
        <begin position="1"/>
        <end position="28"/>
    </location>
</feature>
<feature type="compositionally biased region" description="Basic and acidic residues" evidence="2">
    <location>
        <begin position="36"/>
        <end position="53"/>
    </location>
</feature>
<feature type="modified residue" description="N6-acetyllysine" evidence="1">
    <location>
        <position position="7"/>
    </location>
</feature>
<feature type="modified residue" description="N6-acetyllysine" evidence="1">
    <location>
        <position position="37"/>
    </location>
</feature>
<feature type="cross-link" description="Glycyl lysine isopeptide (Lys-Gly) (interchain with G-Cter in ubiquitin)" evidence="1">
    <location>
        <position position="149"/>
    </location>
</feature>
<comment type="function">
    <text>Core component of nucleosome. Nucleosomes wrap and compact DNA into chromatin, limiting DNA accessibility to the cellular machineries which require DNA as a template. Histones thereby play a central role in transcription regulation, DNA repair, DNA replication and chromosomal stability. DNA accessibility is regulated via a complex set of post-translational modifications of histones, also called histone code, and nucleosome remodeling.</text>
</comment>
<comment type="subunit">
    <text>The nucleosome is a histone octamer containing two molecules each of H2A, H2B, H3 and H4 assembled in one H3-H4 heterotetramer and two H2A-H2B heterodimers. The octamer wraps approximately 147 bp of DNA.</text>
</comment>
<comment type="subcellular location">
    <subcellularLocation>
        <location evidence="1">Nucleus</location>
    </subcellularLocation>
    <subcellularLocation>
        <location evidence="1">Chromosome</location>
    </subcellularLocation>
</comment>
<comment type="PTM">
    <text evidence="1">Can be acetylated to form H2BK6ac and H2BK33ac.</text>
</comment>
<comment type="PTM">
    <text evidence="1">Monoubiquitinated by BRE1 to form H2BK143ub1 and deubiquitinated by UBP26. Required for heterochromatic histone H3 di- and trimethylation at H3K4me. May give a specific tag for epigenetic transcriptional activation (By similarity).</text>
</comment>
<comment type="similarity">
    <text evidence="3">Belongs to the histone H2B family.</text>
</comment>
<comment type="caution">
    <text evidence="3">To ensure consistency between histone entries, we follow the 'Brno' nomenclature for histone modifications, with positions referring to those used in the literature for the 'closest' model organism. Due to slight variations in histone sequences between organisms and to the presence of initiator methionine in UniProtKB/Swiss-Prot sequences, the actual positions of modified amino acids in the sequence generally differ. In this entry the following conventions are used: H2BK6ac = acetylated Lys-7; H2BK33ac = acetylated Lys-37; H2BK143ub1 = monoubiquitinated Lys-149.</text>
</comment>
<keyword id="KW-0007">Acetylation</keyword>
<keyword id="KW-0158">Chromosome</keyword>
<keyword id="KW-0238">DNA-binding</keyword>
<keyword id="KW-1017">Isopeptide bond</keyword>
<keyword id="KW-0544">Nucleosome core</keyword>
<keyword id="KW-0539">Nucleus</keyword>
<keyword id="KW-1185">Reference proteome</keyword>
<keyword id="KW-0832">Ubl conjugation</keyword>
<name>H2B6_ORYSJ</name>
<reference key="1">
    <citation type="journal article" date="2002" name="Nature">
        <title>The genome sequence and structure of rice chromosome 1.</title>
        <authorList>
            <person name="Sasaki T."/>
            <person name="Matsumoto T."/>
            <person name="Yamamoto K."/>
            <person name="Sakata K."/>
            <person name="Baba T."/>
            <person name="Katayose Y."/>
            <person name="Wu J."/>
            <person name="Niimura Y."/>
            <person name="Cheng Z."/>
            <person name="Nagamura Y."/>
            <person name="Antonio B.A."/>
            <person name="Kanamori H."/>
            <person name="Hosokawa S."/>
            <person name="Masukawa M."/>
            <person name="Arikawa K."/>
            <person name="Chiden Y."/>
            <person name="Hayashi M."/>
            <person name="Okamoto M."/>
            <person name="Ando T."/>
            <person name="Aoki H."/>
            <person name="Arita K."/>
            <person name="Hamada M."/>
            <person name="Harada C."/>
            <person name="Hijishita S."/>
            <person name="Honda M."/>
            <person name="Ichikawa Y."/>
            <person name="Idonuma A."/>
            <person name="Iijima M."/>
            <person name="Ikeda M."/>
            <person name="Ikeno M."/>
            <person name="Ito S."/>
            <person name="Ito T."/>
            <person name="Ito Y."/>
            <person name="Ito Y."/>
            <person name="Iwabuchi A."/>
            <person name="Kamiya K."/>
            <person name="Karasawa W."/>
            <person name="Katagiri S."/>
            <person name="Kikuta A."/>
            <person name="Kobayashi N."/>
            <person name="Kono I."/>
            <person name="Machita K."/>
            <person name="Maehara T."/>
            <person name="Mizuno H."/>
            <person name="Mizubayashi T."/>
            <person name="Mukai Y."/>
            <person name="Nagasaki H."/>
            <person name="Nakashima M."/>
            <person name="Nakama Y."/>
            <person name="Nakamichi Y."/>
            <person name="Nakamura M."/>
            <person name="Namiki N."/>
            <person name="Negishi M."/>
            <person name="Ohta I."/>
            <person name="Ono N."/>
            <person name="Saji S."/>
            <person name="Sakai K."/>
            <person name="Shibata M."/>
            <person name="Shimokawa T."/>
            <person name="Shomura A."/>
            <person name="Song J."/>
            <person name="Takazaki Y."/>
            <person name="Terasawa K."/>
            <person name="Tsuji K."/>
            <person name="Waki K."/>
            <person name="Yamagata H."/>
            <person name="Yamane H."/>
            <person name="Yoshiki S."/>
            <person name="Yoshihara R."/>
            <person name="Yukawa K."/>
            <person name="Zhong H."/>
            <person name="Iwama H."/>
            <person name="Endo T."/>
            <person name="Ito H."/>
            <person name="Hahn J.H."/>
            <person name="Kim H.-I."/>
            <person name="Eun M.-Y."/>
            <person name="Yano M."/>
            <person name="Jiang J."/>
            <person name="Gojobori T."/>
        </authorList>
    </citation>
    <scope>NUCLEOTIDE SEQUENCE [LARGE SCALE GENOMIC DNA]</scope>
    <source>
        <strain>cv. Nipponbare</strain>
    </source>
</reference>
<reference key="2">
    <citation type="journal article" date="2005" name="Nature">
        <title>The map-based sequence of the rice genome.</title>
        <authorList>
            <consortium name="International rice genome sequencing project (IRGSP)"/>
        </authorList>
    </citation>
    <scope>NUCLEOTIDE SEQUENCE [LARGE SCALE GENOMIC DNA]</scope>
    <source>
        <strain>cv. Nipponbare</strain>
    </source>
</reference>
<reference key="3">
    <citation type="journal article" date="2008" name="Nucleic Acids Res.">
        <title>The rice annotation project database (RAP-DB): 2008 update.</title>
        <authorList>
            <consortium name="The rice annotation project (RAP)"/>
        </authorList>
    </citation>
    <scope>GENOME REANNOTATION</scope>
    <source>
        <strain>cv. Nipponbare</strain>
    </source>
</reference>
<reference key="4">
    <citation type="journal article" date="2013" name="Rice">
        <title>Improvement of the Oryza sativa Nipponbare reference genome using next generation sequence and optical map data.</title>
        <authorList>
            <person name="Kawahara Y."/>
            <person name="de la Bastide M."/>
            <person name="Hamilton J.P."/>
            <person name="Kanamori H."/>
            <person name="McCombie W.R."/>
            <person name="Ouyang S."/>
            <person name="Schwartz D.C."/>
            <person name="Tanaka T."/>
            <person name="Wu J."/>
            <person name="Zhou S."/>
            <person name="Childs K.L."/>
            <person name="Davidson R.M."/>
            <person name="Lin H."/>
            <person name="Quesada-Ocampo L."/>
            <person name="Vaillancourt B."/>
            <person name="Sakai H."/>
            <person name="Lee S.S."/>
            <person name="Kim J."/>
            <person name="Numa H."/>
            <person name="Itoh T."/>
            <person name="Buell C.R."/>
            <person name="Matsumoto T."/>
        </authorList>
    </citation>
    <scope>GENOME REANNOTATION</scope>
    <source>
        <strain>cv. Nipponbare</strain>
    </source>
</reference>
<reference key="5">
    <citation type="journal article" date="2005" name="PLoS Biol.">
        <title>The genomes of Oryza sativa: a history of duplications.</title>
        <authorList>
            <person name="Yu J."/>
            <person name="Wang J."/>
            <person name="Lin W."/>
            <person name="Li S."/>
            <person name="Li H."/>
            <person name="Zhou J."/>
            <person name="Ni P."/>
            <person name="Dong W."/>
            <person name="Hu S."/>
            <person name="Zeng C."/>
            <person name="Zhang J."/>
            <person name="Zhang Y."/>
            <person name="Li R."/>
            <person name="Xu Z."/>
            <person name="Li S."/>
            <person name="Li X."/>
            <person name="Zheng H."/>
            <person name="Cong L."/>
            <person name="Lin L."/>
            <person name="Yin J."/>
            <person name="Geng J."/>
            <person name="Li G."/>
            <person name="Shi J."/>
            <person name="Liu J."/>
            <person name="Lv H."/>
            <person name="Li J."/>
            <person name="Wang J."/>
            <person name="Deng Y."/>
            <person name="Ran L."/>
            <person name="Shi X."/>
            <person name="Wang X."/>
            <person name="Wu Q."/>
            <person name="Li C."/>
            <person name="Ren X."/>
            <person name="Wang J."/>
            <person name="Wang X."/>
            <person name="Li D."/>
            <person name="Liu D."/>
            <person name="Zhang X."/>
            <person name="Ji Z."/>
            <person name="Zhao W."/>
            <person name="Sun Y."/>
            <person name="Zhang Z."/>
            <person name="Bao J."/>
            <person name="Han Y."/>
            <person name="Dong L."/>
            <person name="Ji J."/>
            <person name="Chen P."/>
            <person name="Wu S."/>
            <person name="Liu J."/>
            <person name="Xiao Y."/>
            <person name="Bu D."/>
            <person name="Tan J."/>
            <person name="Yang L."/>
            <person name="Ye C."/>
            <person name="Zhang J."/>
            <person name="Xu J."/>
            <person name="Zhou Y."/>
            <person name="Yu Y."/>
            <person name="Zhang B."/>
            <person name="Zhuang S."/>
            <person name="Wei H."/>
            <person name="Liu B."/>
            <person name="Lei M."/>
            <person name="Yu H."/>
            <person name="Li Y."/>
            <person name="Xu H."/>
            <person name="Wei S."/>
            <person name="He X."/>
            <person name="Fang L."/>
            <person name="Zhang Z."/>
            <person name="Zhang Y."/>
            <person name="Huang X."/>
            <person name="Su Z."/>
            <person name="Tong W."/>
            <person name="Li J."/>
            <person name="Tong Z."/>
            <person name="Li S."/>
            <person name="Ye J."/>
            <person name="Wang L."/>
            <person name="Fang L."/>
            <person name="Lei T."/>
            <person name="Chen C.-S."/>
            <person name="Chen H.-C."/>
            <person name="Xu Z."/>
            <person name="Li H."/>
            <person name="Huang H."/>
            <person name="Zhang F."/>
            <person name="Xu H."/>
            <person name="Li N."/>
            <person name="Zhao C."/>
            <person name="Li S."/>
            <person name="Dong L."/>
            <person name="Huang Y."/>
            <person name="Li L."/>
            <person name="Xi Y."/>
            <person name="Qi Q."/>
            <person name="Li W."/>
            <person name="Zhang B."/>
            <person name="Hu W."/>
            <person name="Zhang Y."/>
            <person name="Tian X."/>
            <person name="Jiao Y."/>
            <person name="Liang X."/>
            <person name="Jin J."/>
            <person name="Gao L."/>
            <person name="Zheng W."/>
            <person name="Hao B."/>
            <person name="Liu S.-M."/>
            <person name="Wang W."/>
            <person name="Yuan L."/>
            <person name="Cao M."/>
            <person name="McDermott J."/>
            <person name="Samudrala R."/>
            <person name="Wang J."/>
            <person name="Wong G.K.-S."/>
            <person name="Yang H."/>
        </authorList>
    </citation>
    <scope>NUCLEOTIDE SEQUENCE [LARGE SCALE GENOMIC DNA]</scope>
    <source>
        <strain>cv. Nipponbare</strain>
    </source>
</reference>
<dbReference type="EMBL" id="AP002522">
    <property type="protein sequence ID" value="BAB03632.1"/>
    <property type="molecule type" value="Genomic_DNA"/>
</dbReference>
<dbReference type="EMBL" id="AP003045">
    <property type="protein sequence ID" value="BAB44053.1"/>
    <property type="molecule type" value="Genomic_DNA"/>
</dbReference>
<dbReference type="EMBL" id="AP008207">
    <property type="protein sequence ID" value="BAF03965.1"/>
    <property type="molecule type" value="Genomic_DNA"/>
</dbReference>
<dbReference type="EMBL" id="AP014957">
    <property type="protein sequence ID" value="BAS70450.1"/>
    <property type="molecule type" value="Genomic_DNA"/>
</dbReference>
<dbReference type="EMBL" id="CM000138">
    <property type="protein sequence ID" value="EAZ10581.1"/>
    <property type="molecule type" value="Genomic_DNA"/>
</dbReference>
<dbReference type="RefSeq" id="XP_015621595.1">
    <property type="nucleotide sequence ID" value="XM_015766109.1"/>
</dbReference>
<dbReference type="SMR" id="Q9LGH4"/>
<dbReference type="FunCoup" id="Q9LGH4">
    <property type="interactions" value="1710"/>
</dbReference>
<dbReference type="STRING" id="39947.Q9LGH4"/>
<dbReference type="PaxDb" id="39947-Q9LGH4"/>
<dbReference type="EnsemblPlants" id="Os01t0153100-00">
    <property type="protein sequence ID" value="Os01t0153100-00"/>
    <property type="gene ID" value="Os01g0153100"/>
</dbReference>
<dbReference type="Gramene" id="Os01t0153100-00">
    <property type="protein sequence ID" value="Os01t0153100-00"/>
    <property type="gene ID" value="Os01g0153100"/>
</dbReference>
<dbReference type="KEGG" id="dosa:Os01g0153100"/>
<dbReference type="eggNOG" id="KOG1744">
    <property type="taxonomic scope" value="Eukaryota"/>
</dbReference>
<dbReference type="HOGENOM" id="CLU_075666_1_0_1"/>
<dbReference type="InParanoid" id="Q9LGH4"/>
<dbReference type="OMA" id="KSCRKES"/>
<dbReference type="Proteomes" id="UP000000763">
    <property type="component" value="Chromosome 1"/>
</dbReference>
<dbReference type="Proteomes" id="UP000007752">
    <property type="component" value="Chromosome 1"/>
</dbReference>
<dbReference type="Proteomes" id="UP000059680">
    <property type="component" value="Chromosome 1"/>
</dbReference>
<dbReference type="GO" id="GO:0000786">
    <property type="term" value="C:nucleosome"/>
    <property type="evidence" value="ECO:0007669"/>
    <property type="project" value="UniProtKB-KW"/>
</dbReference>
<dbReference type="GO" id="GO:0005634">
    <property type="term" value="C:nucleus"/>
    <property type="evidence" value="ECO:0007669"/>
    <property type="project" value="UniProtKB-SubCell"/>
</dbReference>
<dbReference type="GO" id="GO:0003677">
    <property type="term" value="F:DNA binding"/>
    <property type="evidence" value="ECO:0000318"/>
    <property type="project" value="GO_Central"/>
</dbReference>
<dbReference type="GO" id="GO:0046982">
    <property type="term" value="F:protein heterodimerization activity"/>
    <property type="evidence" value="ECO:0007669"/>
    <property type="project" value="InterPro"/>
</dbReference>
<dbReference type="GO" id="GO:0030527">
    <property type="term" value="F:structural constituent of chromatin"/>
    <property type="evidence" value="ECO:0007669"/>
    <property type="project" value="InterPro"/>
</dbReference>
<dbReference type="CDD" id="cd22910">
    <property type="entry name" value="HFD_H2B"/>
    <property type="match status" value="1"/>
</dbReference>
<dbReference type="FunFam" id="1.10.20.10:FF:000014">
    <property type="entry name" value="Histone H2B"/>
    <property type="match status" value="1"/>
</dbReference>
<dbReference type="Gene3D" id="1.10.20.10">
    <property type="entry name" value="Histone, subunit A"/>
    <property type="match status" value="1"/>
</dbReference>
<dbReference type="InterPro" id="IPR009072">
    <property type="entry name" value="Histone-fold"/>
</dbReference>
<dbReference type="InterPro" id="IPR007125">
    <property type="entry name" value="Histone_H2A/H2B/H3"/>
</dbReference>
<dbReference type="InterPro" id="IPR000558">
    <property type="entry name" value="Histone_H2B"/>
</dbReference>
<dbReference type="InterPro" id="IPR055333">
    <property type="entry name" value="HISTONE_H2B_site"/>
</dbReference>
<dbReference type="PANTHER" id="PTHR23428">
    <property type="entry name" value="HISTONE H2B"/>
    <property type="match status" value="1"/>
</dbReference>
<dbReference type="Pfam" id="PF00125">
    <property type="entry name" value="Histone"/>
    <property type="match status" value="1"/>
</dbReference>
<dbReference type="PRINTS" id="PR00621">
    <property type="entry name" value="HISTONEH2B"/>
</dbReference>
<dbReference type="SMART" id="SM00427">
    <property type="entry name" value="H2B"/>
    <property type="match status" value="1"/>
</dbReference>
<dbReference type="SUPFAM" id="SSF47113">
    <property type="entry name" value="Histone-fold"/>
    <property type="match status" value="1"/>
</dbReference>
<dbReference type="PROSITE" id="PS00357">
    <property type="entry name" value="HISTONE_H2B"/>
    <property type="match status" value="1"/>
</dbReference>
<gene>
    <name type="primary">H2B.6</name>
    <name type="ordered locus">Os01g0153100</name>
    <name type="ordered locus">LOC_Os01g05970</name>
    <name type="ORF">OsJ_000406</name>
    <name type="ORF">P0009G03.42</name>
</gene>
<organism>
    <name type="scientific">Oryza sativa subsp. japonica</name>
    <name type="common">Rice</name>
    <dbReference type="NCBI Taxonomy" id="39947"/>
    <lineage>
        <taxon>Eukaryota</taxon>
        <taxon>Viridiplantae</taxon>
        <taxon>Streptophyta</taxon>
        <taxon>Embryophyta</taxon>
        <taxon>Tracheophyta</taxon>
        <taxon>Spermatophyta</taxon>
        <taxon>Magnoliopsida</taxon>
        <taxon>Liliopsida</taxon>
        <taxon>Poales</taxon>
        <taxon>Poaceae</taxon>
        <taxon>BOP clade</taxon>
        <taxon>Oryzoideae</taxon>
        <taxon>Oryzeae</taxon>
        <taxon>Oryzinae</taxon>
        <taxon>Oryza</taxon>
        <taxon>Oryza sativa</taxon>
    </lineage>
</organism>
<accession>Q9LGH4</accession>
<accession>A0A0P0UYQ0</accession>
<evidence type="ECO:0000250" key="1"/>
<evidence type="ECO:0000256" key="2">
    <source>
        <dbReference type="SAM" id="MobiDB-lite"/>
    </source>
</evidence>
<evidence type="ECO:0000305" key="3"/>
<protein>
    <recommendedName>
        <fullName>Histone H2B.6</fullName>
    </recommendedName>
</protein>
<sequence>MAPKAEKKPAAKKPAEEEPAAEKAEKAPAGKKPKAEKRLPAGKGEKGSGEGKKAGRKKGKKSVETYKIYIFKVLKQVHPDIGISSKAMSIMNSFINDIFEKLAAEAAKLARYNKKPTITSREIQTAVRLVLPGELAKHAVSEGTKAVTKFTSS</sequence>